<gene>
    <name type="ordered locus">BQ2027_MB1861</name>
</gene>
<keyword id="KW-0238">DNA-binding</keyword>
<keyword id="KW-1185">Reference proteome</keyword>
<keyword id="KW-0804">Transcription</keyword>
<keyword id="KW-0805">Transcription regulation</keyword>
<sequence>MTQLVTRARSARGSTLGEQPRQDQLDFADHTGTAGDGNDGAAAASGPVQPGLFPDDSVPDELVGYRGPSACQIAGITYRQLDYWARTSLVVPSIRSAAGSGSQRLYSFKDILVLKIVKRLLDTGISLHNIRVAVDHLRQRGVQDLANITLFSDGTTVYECTSAEEVVDLLQGGQGVFGIAVSGAMRELTGVIADFHGERADGGESIAAPEDELASRRKHRDRKIG</sequence>
<protein>
    <recommendedName>
        <fullName>Uncharacterized HTH-type transcriptional regulator Mb1861</fullName>
    </recommendedName>
</protein>
<dbReference type="EMBL" id="LT708304">
    <property type="protein sequence ID" value="SIU00465.1"/>
    <property type="molecule type" value="Genomic_DNA"/>
</dbReference>
<dbReference type="RefSeq" id="NP_855513.1">
    <property type="nucleotide sequence ID" value="NC_002945.3"/>
</dbReference>
<dbReference type="SMR" id="P67672"/>
<dbReference type="KEGG" id="mbo:BQ2027_MB1861"/>
<dbReference type="PATRIC" id="fig|233413.5.peg.2041"/>
<dbReference type="Proteomes" id="UP000001419">
    <property type="component" value="Chromosome"/>
</dbReference>
<dbReference type="GO" id="GO:0003677">
    <property type="term" value="F:DNA binding"/>
    <property type="evidence" value="ECO:0007669"/>
    <property type="project" value="UniProtKB-KW"/>
</dbReference>
<dbReference type="GO" id="GO:0003700">
    <property type="term" value="F:DNA-binding transcription factor activity"/>
    <property type="evidence" value="ECO:0007669"/>
    <property type="project" value="InterPro"/>
</dbReference>
<dbReference type="CDD" id="cd01105">
    <property type="entry name" value="HTH_GlnR-like"/>
    <property type="match status" value="1"/>
</dbReference>
<dbReference type="Gene3D" id="1.10.1660.10">
    <property type="match status" value="1"/>
</dbReference>
<dbReference type="InterPro" id="IPR009061">
    <property type="entry name" value="DNA-bd_dom_put_sf"/>
</dbReference>
<dbReference type="InterPro" id="IPR000551">
    <property type="entry name" value="MerR-type_HTH_dom"/>
</dbReference>
<dbReference type="InterPro" id="IPR047057">
    <property type="entry name" value="MerR_fam"/>
</dbReference>
<dbReference type="PANTHER" id="PTHR30204:SF3">
    <property type="entry name" value="HTH MERR-TYPE DOMAIN-CONTAINING PROTEIN"/>
    <property type="match status" value="1"/>
</dbReference>
<dbReference type="PANTHER" id="PTHR30204">
    <property type="entry name" value="REDOX-CYCLING DRUG-SENSING TRANSCRIPTIONAL ACTIVATOR SOXR"/>
    <property type="match status" value="1"/>
</dbReference>
<dbReference type="Pfam" id="PF13411">
    <property type="entry name" value="MerR_1"/>
    <property type="match status" value="1"/>
</dbReference>
<dbReference type="SMART" id="SM00422">
    <property type="entry name" value="HTH_MERR"/>
    <property type="match status" value="1"/>
</dbReference>
<dbReference type="SUPFAM" id="SSF46955">
    <property type="entry name" value="Putative DNA-binding domain"/>
    <property type="match status" value="1"/>
</dbReference>
<dbReference type="PROSITE" id="PS50937">
    <property type="entry name" value="HTH_MERR_2"/>
    <property type="match status" value="1"/>
</dbReference>
<feature type="chain" id="PRO_0000098171" description="Uncharacterized HTH-type transcriptional regulator Mb1861">
    <location>
        <begin position="1"/>
        <end position="225"/>
    </location>
</feature>
<feature type="domain" description="HTH merR-type" evidence="1">
    <location>
        <begin position="64"/>
        <end position="136"/>
    </location>
</feature>
<feature type="region of interest" description="Disordered" evidence="2">
    <location>
        <begin position="1"/>
        <end position="48"/>
    </location>
</feature>
<feature type="region of interest" description="Disordered" evidence="2">
    <location>
        <begin position="201"/>
        <end position="225"/>
    </location>
</feature>
<feature type="compositionally biased region" description="Basic and acidic residues" evidence="2">
    <location>
        <begin position="20"/>
        <end position="29"/>
    </location>
</feature>
<feature type="compositionally biased region" description="Basic residues" evidence="2">
    <location>
        <begin position="216"/>
        <end position="225"/>
    </location>
</feature>
<proteinExistence type="predicted"/>
<evidence type="ECO:0000255" key="1">
    <source>
        <dbReference type="PROSITE-ProRule" id="PRU00254"/>
    </source>
</evidence>
<evidence type="ECO:0000256" key="2">
    <source>
        <dbReference type="SAM" id="MobiDB-lite"/>
    </source>
</evidence>
<name>Y1861_MYCBO</name>
<accession>P67672</accession>
<accession>A0A1R3Y091</accession>
<accession>Q50603</accession>
<accession>X2BJB4</accession>
<reference key="1">
    <citation type="journal article" date="2003" name="Proc. Natl. Acad. Sci. U.S.A.">
        <title>The complete genome sequence of Mycobacterium bovis.</title>
        <authorList>
            <person name="Garnier T."/>
            <person name="Eiglmeier K."/>
            <person name="Camus J.-C."/>
            <person name="Medina N."/>
            <person name="Mansoor H."/>
            <person name="Pryor M."/>
            <person name="Duthoy S."/>
            <person name="Grondin S."/>
            <person name="Lacroix C."/>
            <person name="Monsempe C."/>
            <person name="Simon S."/>
            <person name="Harris B."/>
            <person name="Atkin R."/>
            <person name="Doggett J."/>
            <person name="Mayes R."/>
            <person name="Keating L."/>
            <person name="Wheeler P.R."/>
            <person name="Parkhill J."/>
            <person name="Barrell B.G."/>
            <person name="Cole S.T."/>
            <person name="Gordon S.V."/>
            <person name="Hewinson R.G."/>
        </authorList>
    </citation>
    <scope>NUCLEOTIDE SEQUENCE [LARGE SCALE GENOMIC DNA]</scope>
    <source>
        <strain>ATCC BAA-935 / AF2122/97</strain>
    </source>
</reference>
<reference key="2">
    <citation type="journal article" date="2017" name="Genome Announc.">
        <title>Updated reference genome sequence and annotation of Mycobacterium bovis AF2122/97.</title>
        <authorList>
            <person name="Malone K.M."/>
            <person name="Farrell D."/>
            <person name="Stuber T.P."/>
            <person name="Schubert O.T."/>
            <person name="Aebersold R."/>
            <person name="Robbe-Austerman S."/>
            <person name="Gordon S.V."/>
        </authorList>
    </citation>
    <scope>NUCLEOTIDE SEQUENCE [LARGE SCALE GENOMIC DNA]</scope>
    <scope>GENOME REANNOTATION</scope>
    <source>
        <strain>ATCC BAA-935 / AF2122/97</strain>
    </source>
</reference>
<organism>
    <name type="scientific">Mycobacterium bovis (strain ATCC BAA-935 / AF2122/97)</name>
    <dbReference type="NCBI Taxonomy" id="233413"/>
    <lineage>
        <taxon>Bacteria</taxon>
        <taxon>Bacillati</taxon>
        <taxon>Actinomycetota</taxon>
        <taxon>Actinomycetes</taxon>
        <taxon>Mycobacteriales</taxon>
        <taxon>Mycobacteriaceae</taxon>
        <taxon>Mycobacterium</taxon>
        <taxon>Mycobacterium tuberculosis complex</taxon>
    </lineage>
</organism>